<name>PUS7_BOVIN</name>
<gene>
    <name evidence="2" type="primary">PUS7</name>
</gene>
<proteinExistence type="evidence at transcript level"/>
<accession>Q08DI8</accession>
<organism>
    <name type="scientific">Bos taurus</name>
    <name type="common">Bovine</name>
    <dbReference type="NCBI Taxonomy" id="9913"/>
    <lineage>
        <taxon>Eukaryota</taxon>
        <taxon>Metazoa</taxon>
        <taxon>Chordata</taxon>
        <taxon>Craniata</taxon>
        <taxon>Vertebrata</taxon>
        <taxon>Euteleostomi</taxon>
        <taxon>Mammalia</taxon>
        <taxon>Eutheria</taxon>
        <taxon>Laurasiatheria</taxon>
        <taxon>Artiodactyla</taxon>
        <taxon>Ruminantia</taxon>
        <taxon>Pecora</taxon>
        <taxon>Bovidae</taxon>
        <taxon>Bovinae</taxon>
        <taxon>Bos</taxon>
    </lineage>
</organism>
<protein>
    <recommendedName>
        <fullName evidence="5">Pseudouridylate synthase 7 homolog</fullName>
        <ecNumber evidence="2">5.4.99.-</ecNumber>
    </recommendedName>
</protein>
<sequence>MEMTEMTSVSLKRGSVAIEDNDSVAPAEEAKRQKVSGCCPTTGQDGIENSSLPSSEKVPGPPETAEQGEKNSEVPSEEEEEEDGLSEEEEEEEEEAESFADMMKHGLTELDVGITKFVSSHQGFSGILKERYSDFVVHEIGRDGRISHLSDLSVPVDEEDPSEDVFTVLTAEEKQRLEELQLFKNKETSVAIEVIEDTKEKRTIIHQAIKSLFPGLETKTEDREGKKYIVAYHAAGKKALANPRKHSWPKSRGSYCHFVLYKENKDTMDAINLLSKYLRVKPNIFSYMGTKDKRAITVQEIAVLKITAQRLAHLNKCLMNFKLGNFSYQKNPLKLGELQGNHFTVVLRNITGTDNQVEQAMNSLKEIGFINYYGMQRFGTTAVPTYQVGRAILQNSWAEVMDLILKPRSGAEKGYLVKCREEWAKSKDPAAALRKLPVKRCVEGQLLRGLSKYGMKNIVSAFGIIPRNNRLMYIHSYQSYVWNNMVSKRIDEYGLKPVPGDLVLKGATATFIEEDDVNNYSIHDVVMPLPGFDVIYPKHKISEAYREMLTADNLDIDNMRHKIRDYSLSGAYRKIIIRPQNVSWEVVAYDDPKIPLFNTDVDNLEGRPPPVFASEGKYRALKMDFSLPPSTYATMAIREVLKMDTSIKNQTQLNTTWLR</sequence>
<dbReference type="EC" id="5.4.99.-" evidence="2"/>
<dbReference type="EMBL" id="BC123723">
    <property type="protein sequence ID" value="AAI23724.1"/>
    <property type="molecule type" value="mRNA"/>
</dbReference>
<dbReference type="RefSeq" id="NP_001070407.1">
    <property type="nucleotide sequence ID" value="NM_001076939.1"/>
</dbReference>
<dbReference type="SMR" id="Q08DI8"/>
<dbReference type="FunCoup" id="Q08DI8">
    <property type="interactions" value="2848"/>
</dbReference>
<dbReference type="STRING" id="9913.ENSBTAP00000055411"/>
<dbReference type="PaxDb" id="9913-ENSBTAP00000055411"/>
<dbReference type="GeneID" id="615644"/>
<dbReference type="KEGG" id="bta:615644"/>
<dbReference type="CTD" id="54517"/>
<dbReference type="eggNOG" id="KOG2339">
    <property type="taxonomic scope" value="Eukaryota"/>
</dbReference>
<dbReference type="InParanoid" id="Q08DI8"/>
<dbReference type="OrthoDB" id="447290at2759"/>
<dbReference type="Proteomes" id="UP000009136">
    <property type="component" value="Unplaced"/>
</dbReference>
<dbReference type="GO" id="GO:0005634">
    <property type="term" value="C:nucleus"/>
    <property type="evidence" value="ECO:0000250"/>
    <property type="project" value="UniProtKB"/>
</dbReference>
<dbReference type="GO" id="GO:0009982">
    <property type="term" value="F:pseudouridine synthase activity"/>
    <property type="evidence" value="ECO:0000250"/>
    <property type="project" value="UniProtKB"/>
</dbReference>
<dbReference type="GO" id="GO:0003723">
    <property type="term" value="F:RNA binding"/>
    <property type="evidence" value="ECO:0007669"/>
    <property type="project" value="InterPro"/>
</dbReference>
<dbReference type="GO" id="GO:0160150">
    <property type="term" value="F:tRNA pseudouridine(13) synthase activity"/>
    <property type="evidence" value="ECO:0007669"/>
    <property type="project" value="RHEA"/>
</dbReference>
<dbReference type="GO" id="GO:0006397">
    <property type="term" value="P:mRNA processing"/>
    <property type="evidence" value="ECO:0007669"/>
    <property type="project" value="UniProtKB-KW"/>
</dbReference>
<dbReference type="GO" id="GO:1990481">
    <property type="term" value="P:mRNA pseudouridine synthesis"/>
    <property type="evidence" value="ECO:0000250"/>
    <property type="project" value="UniProtKB"/>
</dbReference>
<dbReference type="GO" id="GO:0017148">
    <property type="term" value="P:negative regulation of translation"/>
    <property type="evidence" value="ECO:0000250"/>
    <property type="project" value="UniProtKB"/>
</dbReference>
<dbReference type="GO" id="GO:0001522">
    <property type="term" value="P:pseudouridine synthesis"/>
    <property type="evidence" value="ECO:0000318"/>
    <property type="project" value="GO_Central"/>
</dbReference>
<dbReference type="GO" id="GO:1902036">
    <property type="term" value="P:regulation of hematopoietic stem cell differentiation"/>
    <property type="evidence" value="ECO:0000250"/>
    <property type="project" value="UniProtKB"/>
</dbReference>
<dbReference type="GO" id="GO:2000380">
    <property type="term" value="P:regulation of mesoderm development"/>
    <property type="evidence" value="ECO:0000250"/>
    <property type="project" value="UniProtKB"/>
</dbReference>
<dbReference type="GO" id="GO:0008380">
    <property type="term" value="P:RNA splicing"/>
    <property type="evidence" value="ECO:0007669"/>
    <property type="project" value="UniProtKB-KW"/>
</dbReference>
<dbReference type="GO" id="GO:0031119">
    <property type="term" value="P:tRNA pseudouridine synthesis"/>
    <property type="evidence" value="ECO:0000250"/>
    <property type="project" value="UniProtKB"/>
</dbReference>
<dbReference type="CDD" id="cd02576">
    <property type="entry name" value="PseudoU_synth_ScPUS7"/>
    <property type="match status" value="1"/>
</dbReference>
<dbReference type="FunFam" id="3.30.2350.20:FF:000002">
    <property type="entry name" value="Pseudouridylate synthase 7 homolog"/>
    <property type="match status" value="1"/>
</dbReference>
<dbReference type="FunFam" id="3.30.2350.20:FF:000003">
    <property type="entry name" value="Pseudouridylate synthase 7 homolog"/>
    <property type="match status" value="1"/>
</dbReference>
<dbReference type="Gene3D" id="3.30.2350.20">
    <property type="entry name" value="TruD, catalytic domain"/>
    <property type="match status" value="2"/>
</dbReference>
<dbReference type="InterPro" id="IPR020103">
    <property type="entry name" value="PsdUridine_synth_cat_dom_sf"/>
</dbReference>
<dbReference type="InterPro" id="IPR001656">
    <property type="entry name" value="PsdUridine_synth_TruD"/>
</dbReference>
<dbReference type="InterPro" id="IPR020119">
    <property type="entry name" value="PsdUridine_synth_TruD_CS"/>
</dbReference>
<dbReference type="InterPro" id="IPR011760">
    <property type="entry name" value="PsdUridine_synth_TruD_insert"/>
</dbReference>
<dbReference type="InterPro" id="IPR042214">
    <property type="entry name" value="TruD_catalytic"/>
</dbReference>
<dbReference type="NCBIfam" id="TIGR00094">
    <property type="entry name" value="tRNA_TruD_broad"/>
    <property type="match status" value="1"/>
</dbReference>
<dbReference type="PANTHER" id="PTHR13326:SF31">
    <property type="entry name" value="PSEUDOURIDYLATE SYNTHASE 7 HOMOLOG"/>
    <property type="match status" value="1"/>
</dbReference>
<dbReference type="PANTHER" id="PTHR13326">
    <property type="entry name" value="TRNA PSEUDOURIDINE SYNTHASE D"/>
    <property type="match status" value="1"/>
</dbReference>
<dbReference type="Pfam" id="PF01142">
    <property type="entry name" value="TruD"/>
    <property type="match status" value="1"/>
</dbReference>
<dbReference type="PIRSF" id="PIRSF037016">
    <property type="entry name" value="Pseudouridin_synth_euk_prd"/>
    <property type="match status" value="1"/>
</dbReference>
<dbReference type="SUPFAM" id="SSF55120">
    <property type="entry name" value="Pseudouridine synthase"/>
    <property type="match status" value="1"/>
</dbReference>
<dbReference type="PROSITE" id="PS50984">
    <property type="entry name" value="TRUD"/>
    <property type="match status" value="1"/>
</dbReference>
<dbReference type="PROSITE" id="PS01268">
    <property type="entry name" value="UPF0024"/>
    <property type="match status" value="1"/>
</dbReference>
<evidence type="ECO:0000250" key="1">
    <source>
        <dbReference type="UniProtKB" id="Q57261"/>
    </source>
</evidence>
<evidence type="ECO:0000250" key="2">
    <source>
        <dbReference type="UniProtKB" id="Q96PZ0"/>
    </source>
</evidence>
<evidence type="ECO:0000255" key="3">
    <source>
        <dbReference type="PROSITE-ProRule" id="PRU00342"/>
    </source>
</evidence>
<evidence type="ECO:0000256" key="4">
    <source>
        <dbReference type="SAM" id="MobiDB-lite"/>
    </source>
</evidence>
<evidence type="ECO:0000305" key="5"/>
<reference key="1">
    <citation type="submission" date="2006-09" db="EMBL/GenBank/DDBJ databases">
        <authorList>
            <consortium name="NIH - Mammalian Gene Collection (MGC) project"/>
        </authorList>
    </citation>
    <scope>NUCLEOTIDE SEQUENCE [LARGE SCALE MRNA]</scope>
    <source>
        <strain>Hereford</strain>
        <tissue>Ascending colon</tissue>
    </source>
</reference>
<comment type="function">
    <text evidence="2">Pseudouridylate synthase that catalyzes pseudouridylation of RNAs. Acts as a regulator of protein synthesis in embryonic stem cells by mediating pseudouridylation of RNA fragments derived from tRNAs (tRFs): pseudouridylated tRFs inhibit translation by targeting the translation initiation complex. Also catalyzes pseudouridylation of mRNAs: mediates pseudouridylation of mRNAs with the consensus sequence 5'-UGUAG-3'. Acts as a regulator of pre-mRNA splicing by mediating pseudouridylation of pre-mRNAs at locations associated with alternatively spliced regions. Pseudouridylation of pre-mRNAs near splice sites directly regulates mRNA splicing and mRNA 3'-end processing. In addition to mRNAs and tRNAs, binds other types of RNAs, such as snRNAs, Y RNAs and vault RNAs, suggesting that it can catalyze pseudouridylation of many RNA types.</text>
</comment>
<comment type="catalytic activity">
    <reaction evidence="2">
        <text>a uridine in tRNA = a pseudouridine in tRNA</text>
        <dbReference type="Rhea" id="RHEA:54572"/>
        <dbReference type="Rhea" id="RHEA-COMP:13339"/>
        <dbReference type="Rhea" id="RHEA-COMP:13934"/>
        <dbReference type="ChEBI" id="CHEBI:65314"/>
        <dbReference type="ChEBI" id="CHEBI:65315"/>
    </reaction>
</comment>
<comment type="catalytic activity">
    <reaction evidence="2">
        <text>uridine(13) in tRNA = pseudouridine(13) in tRNA</text>
        <dbReference type="Rhea" id="RHEA:42540"/>
        <dbReference type="Rhea" id="RHEA-COMP:10105"/>
        <dbReference type="Rhea" id="RHEA-COMP:10106"/>
        <dbReference type="ChEBI" id="CHEBI:65314"/>
        <dbReference type="ChEBI" id="CHEBI:65315"/>
    </reaction>
</comment>
<comment type="catalytic activity">
    <reaction evidence="2">
        <text>a uridine in mRNA = a pseudouridine in mRNA</text>
        <dbReference type="Rhea" id="RHEA:56644"/>
        <dbReference type="Rhea" id="RHEA-COMP:14658"/>
        <dbReference type="Rhea" id="RHEA-COMP:14659"/>
        <dbReference type="ChEBI" id="CHEBI:65314"/>
        <dbReference type="ChEBI" id="CHEBI:65315"/>
    </reaction>
</comment>
<comment type="subunit">
    <text evidence="2">Interacts with SIRT1.</text>
</comment>
<comment type="subcellular location">
    <subcellularLocation>
        <location evidence="2">Nucleus</location>
    </subcellularLocation>
</comment>
<comment type="similarity">
    <text evidence="5">Belongs to the pseudouridine synthase TruD family.</text>
</comment>
<keyword id="KW-0007">Acetylation</keyword>
<keyword id="KW-0413">Isomerase</keyword>
<keyword id="KW-0507">mRNA processing</keyword>
<keyword id="KW-0508">mRNA splicing</keyword>
<keyword id="KW-0539">Nucleus</keyword>
<keyword id="KW-0597">Phosphoprotein</keyword>
<keyword id="KW-1185">Reference proteome</keyword>
<keyword id="KW-0819">tRNA processing</keyword>
<feature type="chain" id="PRO_0000316784" description="Pseudouridylate synthase 7 homolog">
    <location>
        <begin position="1"/>
        <end position="659"/>
    </location>
</feature>
<feature type="domain" description="TRUD" evidence="3">
    <location>
        <begin position="368"/>
        <end position="578"/>
    </location>
</feature>
<feature type="region of interest" description="Disordered" evidence="4">
    <location>
        <begin position="1"/>
        <end position="99"/>
    </location>
</feature>
<feature type="compositionally biased region" description="Polar residues" evidence="4">
    <location>
        <begin position="1"/>
        <end position="10"/>
    </location>
</feature>
<feature type="compositionally biased region" description="Polar residues" evidence="4">
    <location>
        <begin position="39"/>
        <end position="54"/>
    </location>
</feature>
<feature type="compositionally biased region" description="Acidic residues" evidence="4">
    <location>
        <begin position="75"/>
        <end position="98"/>
    </location>
</feature>
<feature type="active site" description="Nucleophile" evidence="1">
    <location>
        <position position="292"/>
    </location>
</feature>
<feature type="modified residue" description="N-acetylmethionine" evidence="2">
    <location>
        <position position="1"/>
    </location>
</feature>
<feature type="modified residue" description="Phosphoserine" evidence="2">
    <location>
        <position position="10"/>
    </location>
</feature>
<feature type="modified residue" description="Phosphoserine" evidence="2">
    <location>
        <position position="125"/>
    </location>
</feature>